<keyword id="KW-0325">Glycoprotein</keyword>
<keyword id="KW-1185">Reference proteome</keyword>
<keyword id="KW-0964">Secreted</keyword>
<keyword id="KW-0732">Signal</keyword>
<protein>
    <recommendedName>
        <fullName>Protein CREG2</fullName>
    </recommendedName>
    <alternativeName>
        <fullName evidence="4">Cellular repressor of E1A-stimulated genes 2</fullName>
    </alternativeName>
</protein>
<name>CREG2_MOUSE</name>
<reference key="1">
    <citation type="journal article" date="2002" name="Genomics">
        <title>Identification and characterization of novel members of the CREG family, putative secreted glycoproteins expressed specifically in brain.</title>
        <authorList>
            <person name="Kunita R."/>
            <person name="Otomo A."/>
            <person name="Ikeda J.-E."/>
        </authorList>
    </citation>
    <scope>NUCLEOTIDE SEQUENCE [MRNA]</scope>
    <scope>TISSUE SPECIFICITY</scope>
    <scope>SUBCELLULAR LOCATION</scope>
    <scope>GLYCOSYLATION</scope>
    <scope>MUTAGENESIS OF 164-ASN--ASN-186</scope>
    <source>
        <tissue>Brain</tissue>
    </source>
</reference>
<reference key="2">
    <citation type="journal article" date="2005" name="Science">
        <title>The transcriptional landscape of the mammalian genome.</title>
        <authorList>
            <person name="Carninci P."/>
            <person name="Kasukawa T."/>
            <person name="Katayama S."/>
            <person name="Gough J."/>
            <person name="Frith M.C."/>
            <person name="Maeda N."/>
            <person name="Oyama R."/>
            <person name="Ravasi T."/>
            <person name="Lenhard B."/>
            <person name="Wells C."/>
            <person name="Kodzius R."/>
            <person name="Shimokawa K."/>
            <person name="Bajic V.B."/>
            <person name="Brenner S.E."/>
            <person name="Batalov S."/>
            <person name="Forrest A.R."/>
            <person name="Zavolan M."/>
            <person name="Davis M.J."/>
            <person name="Wilming L.G."/>
            <person name="Aidinis V."/>
            <person name="Allen J.E."/>
            <person name="Ambesi-Impiombato A."/>
            <person name="Apweiler R."/>
            <person name="Aturaliya R.N."/>
            <person name="Bailey T.L."/>
            <person name="Bansal M."/>
            <person name="Baxter L."/>
            <person name="Beisel K.W."/>
            <person name="Bersano T."/>
            <person name="Bono H."/>
            <person name="Chalk A.M."/>
            <person name="Chiu K.P."/>
            <person name="Choudhary V."/>
            <person name="Christoffels A."/>
            <person name="Clutterbuck D.R."/>
            <person name="Crowe M.L."/>
            <person name="Dalla E."/>
            <person name="Dalrymple B.P."/>
            <person name="de Bono B."/>
            <person name="Della Gatta G."/>
            <person name="di Bernardo D."/>
            <person name="Down T."/>
            <person name="Engstrom P."/>
            <person name="Fagiolini M."/>
            <person name="Faulkner G."/>
            <person name="Fletcher C.F."/>
            <person name="Fukushima T."/>
            <person name="Furuno M."/>
            <person name="Futaki S."/>
            <person name="Gariboldi M."/>
            <person name="Georgii-Hemming P."/>
            <person name="Gingeras T.R."/>
            <person name="Gojobori T."/>
            <person name="Green R.E."/>
            <person name="Gustincich S."/>
            <person name="Harbers M."/>
            <person name="Hayashi Y."/>
            <person name="Hensch T.K."/>
            <person name="Hirokawa N."/>
            <person name="Hill D."/>
            <person name="Huminiecki L."/>
            <person name="Iacono M."/>
            <person name="Ikeo K."/>
            <person name="Iwama A."/>
            <person name="Ishikawa T."/>
            <person name="Jakt M."/>
            <person name="Kanapin A."/>
            <person name="Katoh M."/>
            <person name="Kawasawa Y."/>
            <person name="Kelso J."/>
            <person name="Kitamura H."/>
            <person name="Kitano H."/>
            <person name="Kollias G."/>
            <person name="Krishnan S.P."/>
            <person name="Kruger A."/>
            <person name="Kummerfeld S.K."/>
            <person name="Kurochkin I.V."/>
            <person name="Lareau L.F."/>
            <person name="Lazarevic D."/>
            <person name="Lipovich L."/>
            <person name="Liu J."/>
            <person name="Liuni S."/>
            <person name="McWilliam S."/>
            <person name="Madan Babu M."/>
            <person name="Madera M."/>
            <person name="Marchionni L."/>
            <person name="Matsuda H."/>
            <person name="Matsuzawa S."/>
            <person name="Miki H."/>
            <person name="Mignone F."/>
            <person name="Miyake S."/>
            <person name="Morris K."/>
            <person name="Mottagui-Tabar S."/>
            <person name="Mulder N."/>
            <person name="Nakano N."/>
            <person name="Nakauchi H."/>
            <person name="Ng P."/>
            <person name="Nilsson R."/>
            <person name="Nishiguchi S."/>
            <person name="Nishikawa S."/>
            <person name="Nori F."/>
            <person name="Ohara O."/>
            <person name="Okazaki Y."/>
            <person name="Orlando V."/>
            <person name="Pang K.C."/>
            <person name="Pavan W.J."/>
            <person name="Pavesi G."/>
            <person name="Pesole G."/>
            <person name="Petrovsky N."/>
            <person name="Piazza S."/>
            <person name="Reed J."/>
            <person name="Reid J.F."/>
            <person name="Ring B.Z."/>
            <person name="Ringwald M."/>
            <person name="Rost B."/>
            <person name="Ruan Y."/>
            <person name="Salzberg S.L."/>
            <person name="Sandelin A."/>
            <person name="Schneider C."/>
            <person name="Schoenbach C."/>
            <person name="Sekiguchi K."/>
            <person name="Semple C.A."/>
            <person name="Seno S."/>
            <person name="Sessa L."/>
            <person name="Sheng Y."/>
            <person name="Shibata Y."/>
            <person name="Shimada H."/>
            <person name="Shimada K."/>
            <person name="Silva D."/>
            <person name="Sinclair B."/>
            <person name="Sperling S."/>
            <person name="Stupka E."/>
            <person name="Sugiura K."/>
            <person name="Sultana R."/>
            <person name="Takenaka Y."/>
            <person name="Taki K."/>
            <person name="Tammoja K."/>
            <person name="Tan S.L."/>
            <person name="Tang S."/>
            <person name="Taylor M.S."/>
            <person name="Tegner J."/>
            <person name="Teichmann S.A."/>
            <person name="Ueda H.R."/>
            <person name="van Nimwegen E."/>
            <person name="Verardo R."/>
            <person name="Wei C.L."/>
            <person name="Yagi K."/>
            <person name="Yamanishi H."/>
            <person name="Zabarovsky E."/>
            <person name="Zhu S."/>
            <person name="Zimmer A."/>
            <person name="Hide W."/>
            <person name="Bult C."/>
            <person name="Grimmond S.M."/>
            <person name="Teasdale R.D."/>
            <person name="Liu E.T."/>
            <person name="Brusic V."/>
            <person name="Quackenbush J."/>
            <person name="Wahlestedt C."/>
            <person name="Mattick J.S."/>
            <person name="Hume D.A."/>
            <person name="Kai C."/>
            <person name="Sasaki D."/>
            <person name="Tomaru Y."/>
            <person name="Fukuda S."/>
            <person name="Kanamori-Katayama M."/>
            <person name="Suzuki M."/>
            <person name="Aoki J."/>
            <person name="Arakawa T."/>
            <person name="Iida J."/>
            <person name="Imamura K."/>
            <person name="Itoh M."/>
            <person name="Kato T."/>
            <person name="Kawaji H."/>
            <person name="Kawagashira N."/>
            <person name="Kawashima T."/>
            <person name="Kojima M."/>
            <person name="Kondo S."/>
            <person name="Konno H."/>
            <person name="Nakano K."/>
            <person name="Ninomiya N."/>
            <person name="Nishio T."/>
            <person name="Okada M."/>
            <person name="Plessy C."/>
            <person name="Shibata K."/>
            <person name="Shiraki T."/>
            <person name="Suzuki S."/>
            <person name="Tagami M."/>
            <person name="Waki K."/>
            <person name="Watahiki A."/>
            <person name="Okamura-Oho Y."/>
            <person name="Suzuki H."/>
            <person name="Kawai J."/>
            <person name="Hayashizaki Y."/>
        </authorList>
    </citation>
    <scope>NUCLEOTIDE SEQUENCE [LARGE SCALE MRNA]</scope>
    <source>
        <strain>C57BL/6J</strain>
        <tissue>Brain cortex</tissue>
    </source>
</reference>
<reference key="3">
    <citation type="journal article" date="2004" name="Genome Res.">
        <title>The status, quality, and expansion of the NIH full-length cDNA project: the Mammalian Gene Collection (MGC).</title>
        <authorList>
            <consortium name="The MGC Project Team"/>
        </authorList>
    </citation>
    <scope>NUCLEOTIDE SEQUENCE [LARGE SCALE MRNA]</scope>
    <source>
        <tissue>Brain</tissue>
        <tissue>Eye</tissue>
    </source>
</reference>
<sequence length="288" mass="31764">MSLSGRERPAWPGSRLSWLLCCSALLSPAAGYVIVSSVSWAVTNEVDEELDSASTEEALPALLEDSSSIWQQSFPASAHKEDTHLRPRGSARARPAPAARGMFSYRRESGSSEASPGPRVHAGTARSLAHASSWGCLATVSTHEKIQGLPFGSCLAISDGPVHNSTGIPFFYMTAKDPAVADLVKNPTASLVLPESEGEFCRKNIVDPEDPRCARLTLTGRMVTVPPGEVEFAKQAMFSRHPGMRKWPRQYEWFFMKMWVEHIWLQKWYGGVSDIPREEYFKAAPRKA</sequence>
<gene>
    <name type="primary">Creg2</name>
</gene>
<proteinExistence type="evidence at protein level"/>
<evidence type="ECO:0000255" key="1"/>
<evidence type="ECO:0000256" key="2">
    <source>
        <dbReference type="SAM" id="MobiDB-lite"/>
    </source>
</evidence>
<evidence type="ECO:0000269" key="3">
    <source>
    </source>
</evidence>
<evidence type="ECO:0000303" key="4">
    <source>
    </source>
</evidence>
<evidence type="ECO:0000305" key="5"/>
<dbReference type="EMBL" id="AB046110">
    <property type="protein sequence ID" value="BAC22190.1"/>
    <property type="molecule type" value="mRNA"/>
</dbReference>
<dbReference type="EMBL" id="AK043871">
    <property type="protein sequence ID" value="BAC31687.1"/>
    <property type="molecule type" value="mRNA"/>
</dbReference>
<dbReference type="EMBL" id="AK044192">
    <property type="protein sequence ID" value="BAC31811.1"/>
    <property type="molecule type" value="mRNA"/>
</dbReference>
<dbReference type="EMBL" id="AK046245">
    <property type="protein sequence ID" value="BAC32652.1"/>
    <property type="status" value="ALT_INIT"/>
    <property type="molecule type" value="mRNA"/>
</dbReference>
<dbReference type="EMBL" id="AK048589">
    <property type="protein sequence ID" value="BAC33382.1"/>
    <property type="status" value="ALT_FRAME"/>
    <property type="molecule type" value="mRNA"/>
</dbReference>
<dbReference type="EMBL" id="BC034115">
    <property type="protein sequence ID" value="AAH34115.1"/>
    <property type="molecule type" value="mRNA"/>
</dbReference>
<dbReference type="EMBL" id="BC116790">
    <property type="protein sequence ID" value="AAI16791.1"/>
    <property type="molecule type" value="mRNA"/>
</dbReference>
<dbReference type="EMBL" id="BC116792">
    <property type="protein sequence ID" value="AAI16793.1"/>
    <property type="molecule type" value="mRNA"/>
</dbReference>
<dbReference type="CCDS" id="CCDS14908.1"/>
<dbReference type="RefSeq" id="NP_733485.1">
    <property type="nucleotide sequence ID" value="NM_170597.4"/>
</dbReference>
<dbReference type="SMR" id="Q8BGC9"/>
<dbReference type="FunCoup" id="Q8BGC9">
    <property type="interactions" value="147"/>
</dbReference>
<dbReference type="STRING" id="10090.ENSMUSP00000052871"/>
<dbReference type="GlyConnect" id="2621">
    <property type="glycosylation" value="1 N-Linked glycan (1 site)"/>
</dbReference>
<dbReference type="GlyCosmos" id="Q8BGC9">
    <property type="glycosylation" value="1 site, 1 glycan"/>
</dbReference>
<dbReference type="GlyGen" id="Q8BGC9">
    <property type="glycosylation" value="1 site, 1 N-linked glycan (1 site)"/>
</dbReference>
<dbReference type="iPTMnet" id="Q8BGC9"/>
<dbReference type="PhosphoSitePlus" id="Q8BGC9"/>
<dbReference type="PaxDb" id="10090-ENSMUSP00000052871"/>
<dbReference type="ProteomicsDB" id="285358"/>
<dbReference type="Antibodypedia" id="48936">
    <property type="antibodies" value="113 antibodies from 19 providers"/>
</dbReference>
<dbReference type="DNASU" id="263764"/>
<dbReference type="Ensembl" id="ENSMUST00000053355.6">
    <property type="protein sequence ID" value="ENSMUSP00000052871.5"/>
    <property type="gene ID" value="ENSMUSG00000050967.6"/>
</dbReference>
<dbReference type="GeneID" id="263764"/>
<dbReference type="KEGG" id="mmu:263764"/>
<dbReference type="UCSC" id="uc007atm.1">
    <property type="organism name" value="mouse"/>
</dbReference>
<dbReference type="AGR" id="MGI:1928333"/>
<dbReference type="CTD" id="200407"/>
<dbReference type="MGI" id="MGI:1928333">
    <property type="gene designation" value="Creg2"/>
</dbReference>
<dbReference type="VEuPathDB" id="HostDB:ENSMUSG00000050967"/>
<dbReference type="eggNOG" id="KOG3374">
    <property type="taxonomic scope" value="Eukaryota"/>
</dbReference>
<dbReference type="GeneTree" id="ENSGT00390000005914"/>
<dbReference type="HOGENOM" id="CLU_083635_0_0_1"/>
<dbReference type="InParanoid" id="Q8BGC9"/>
<dbReference type="OMA" id="HASSWGC"/>
<dbReference type="OrthoDB" id="9869319at2759"/>
<dbReference type="PhylomeDB" id="Q8BGC9"/>
<dbReference type="TreeFam" id="TF324680"/>
<dbReference type="BioGRID-ORCS" id="263764">
    <property type="hits" value="2 hits in 78 CRISPR screens"/>
</dbReference>
<dbReference type="PRO" id="PR:Q8BGC9"/>
<dbReference type="Proteomes" id="UP000000589">
    <property type="component" value="Chromosome 1"/>
</dbReference>
<dbReference type="RNAct" id="Q8BGC9">
    <property type="molecule type" value="protein"/>
</dbReference>
<dbReference type="Bgee" id="ENSMUSG00000050967">
    <property type="expression patterns" value="Expressed in lumbar subsegment of spinal cord and 78 other cell types or tissues"/>
</dbReference>
<dbReference type="GO" id="GO:0005783">
    <property type="term" value="C:endoplasmic reticulum"/>
    <property type="evidence" value="ECO:0000314"/>
    <property type="project" value="MGI"/>
</dbReference>
<dbReference type="GO" id="GO:0005576">
    <property type="term" value="C:extracellular region"/>
    <property type="evidence" value="ECO:0007669"/>
    <property type="project" value="UniProtKB-SubCell"/>
</dbReference>
<dbReference type="GO" id="GO:0005794">
    <property type="term" value="C:Golgi apparatus"/>
    <property type="evidence" value="ECO:0000314"/>
    <property type="project" value="MGI"/>
</dbReference>
<dbReference type="FunFam" id="2.30.110.10:FF:000004">
    <property type="entry name" value="Cellular repressor of E1A-stimulated genes 1"/>
    <property type="match status" value="1"/>
</dbReference>
<dbReference type="Gene3D" id="2.30.110.10">
    <property type="entry name" value="Electron Transport, Fmn-binding Protein, Chain A"/>
    <property type="match status" value="1"/>
</dbReference>
<dbReference type="InterPro" id="IPR014631">
    <property type="entry name" value="CREG"/>
</dbReference>
<dbReference type="InterPro" id="IPR055343">
    <property type="entry name" value="CREG_beta-barrel"/>
</dbReference>
<dbReference type="InterPro" id="IPR012349">
    <property type="entry name" value="Split_barrel_FMN-bd"/>
</dbReference>
<dbReference type="PANTHER" id="PTHR13343">
    <property type="entry name" value="CREG1 PROTEIN"/>
    <property type="match status" value="1"/>
</dbReference>
<dbReference type="PANTHER" id="PTHR13343:SF15">
    <property type="entry name" value="PROTEIN CREG2"/>
    <property type="match status" value="1"/>
</dbReference>
<dbReference type="Pfam" id="PF13883">
    <property type="entry name" value="CREG_beta-barrel"/>
    <property type="match status" value="1"/>
</dbReference>
<dbReference type="PIRSF" id="PIRSF036911">
    <property type="entry name" value="CREG"/>
    <property type="match status" value="1"/>
</dbReference>
<dbReference type="SUPFAM" id="SSF50475">
    <property type="entry name" value="FMN-binding split barrel"/>
    <property type="match status" value="1"/>
</dbReference>
<feature type="signal peptide" evidence="1">
    <location>
        <begin position="1"/>
        <end position="31"/>
    </location>
</feature>
<feature type="chain" id="PRO_0000006207" description="Protein CREG2">
    <location>
        <begin position="32"/>
        <end position="288"/>
    </location>
</feature>
<feature type="region of interest" description="Disordered" evidence="2">
    <location>
        <begin position="78"/>
        <end position="100"/>
    </location>
</feature>
<feature type="glycosylation site" description="N-linked (GlcNAc...) asparagine" evidence="3">
    <location>
        <position position="164"/>
    </location>
</feature>
<feature type="mutagenesis site" description="Abolishes N-glycosylation." evidence="3">
    <original>NSTGIPFFYMTAKDPAVADLVKN</original>
    <variation>QSTGIPFFYMTAKDPAVADLVKQ</variation>
    <location>
        <begin position="164"/>
        <end position="186"/>
    </location>
</feature>
<feature type="mutagenesis site" description="Abolishes N-glycosylation.">
    <original>N</original>
    <variation>Q</variation>
    <location>
        <position position="164"/>
    </location>
</feature>
<feature type="mutagenesis site" description="N-glycosylated.">
    <original>N</original>
    <variation>Q</variation>
    <location>
        <position position="186"/>
    </location>
</feature>
<feature type="sequence conflict" description="In Ref. 3; AAH34115." evidence="5" ref="3">
    <original>LLSP</original>
    <variation>DAWA</variation>
    <location>
        <begin position="25"/>
        <end position="28"/>
    </location>
</feature>
<feature type="sequence conflict" description="In Ref. 2; BAC33382." evidence="5" ref="2">
    <original>D</original>
    <variation>E</variation>
    <location>
        <position position="51"/>
    </location>
</feature>
<feature type="sequence conflict" description="In Ref. 2; BAC33382." evidence="5" ref="2">
    <original>Q</original>
    <variation>H</variation>
    <location>
        <position position="266"/>
    </location>
</feature>
<comment type="subcellular location">
    <subcellularLocation>
        <location evidence="3">Secreted</location>
    </subcellularLocation>
</comment>
<comment type="tissue specificity">
    <text evidence="3">Brain specific.</text>
</comment>
<comment type="similarity">
    <text evidence="5">Belongs to the CREG family.</text>
</comment>
<comment type="sequence caution" evidence="5">
    <conflict type="erroneous initiation">
        <sequence resource="EMBL-CDS" id="BAC32652"/>
    </conflict>
</comment>
<comment type="sequence caution" evidence="5">
    <conflict type="frameshift">
        <sequence resource="EMBL-CDS" id="BAC33382"/>
    </conflict>
</comment>
<organism>
    <name type="scientific">Mus musculus</name>
    <name type="common">Mouse</name>
    <dbReference type="NCBI Taxonomy" id="10090"/>
    <lineage>
        <taxon>Eukaryota</taxon>
        <taxon>Metazoa</taxon>
        <taxon>Chordata</taxon>
        <taxon>Craniata</taxon>
        <taxon>Vertebrata</taxon>
        <taxon>Euteleostomi</taxon>
        <taxon>Mammalia</taxon>
        <taxon>Eutheria</taxon>
        <taxon>Euarchontoglires</taxon>
        <taxon>Glires</taxon>
        <taxon>Rodentia</taxon>
        <taxon>Myomorpha</taxon>
        <taxon>Muroidea</taxon>
        <taxon>Muridae</taxon>
        <taxon>Murinae</taxon>
        <taxon>Mus</taxon>
        <taxon>Mus</taxon>
    </lineage>
</organism>
<accession>Q8BGC9</accession>
<accession>Q14AL7</accession>
<accession>Q8BL64</accession>
<accession>Q8BX89</accession>
<accession>Q8K049</accession>